<organism>
    <name type="scientific">Chlamydia trachomatis serovar L2b (strain UCH-1/proctitis)</name>
    <dbReference type="NCBI Taxonomy" id="471473"/>
    <lineage>
        <taxon>Bacteria</taxon>
        <taxon>Pseudomonadati</taxon>
        <taxon>Chlamydiota</taxon>
        <taxon>Chlamydiia</taxon>
        <taxon>Chlamydiales</taxon>
        <taxon>Chlamydiaceae</taxon>
        <taxon>Chlamydia/Chlamydophila group</taxon>
        <taxon>Chlamydia</taxon>
    </lineage>
</organism>
<protein>
    <recommendedName>
        <fullName evidence="1">tRNA pseudouridine synthase B</fullName>
        <ecNumber evidence="1">5.4.99.25</ecNumber>
    </recommendedName>
    <alternativeName>
        <fullName evidence="1">tRNA pseudouridine(55) synthase</fullName>
        <shortName evidence="1">Psi55 synthase</shortName>
    </alternativeName>
    <alternativeName>
        <fullName evidence="1">tRNA pseudouridylate synthase</fullName>
    </alternativeName>
    <alternativeName>
        <fullName evidence="1">tRNA-uridine isomerase</fullName>
    </alternativeName>
</protein>
<dbReference type="EC" id="5.4.99.25" evidence="1"/>
<dbReference type="EMBL" id="AM884177">
    <property type="protein sequence ID" value="CAP06743.1"/>
    <property type="molecule type" value="Genomic_DNA"/>
</dbReference>
<dbReference type="RefSeq" id="WP_009873551.1">
    <property type="nucleotide sequence ID" value="NC_010280.2"/>
</dbReference>
<dbReference type="SMR" id="B0BB81"/>
<dbReference type="KEGG" id="ctl:CTLon_0345"/>
<dbReference type="HOGENOM" id="CLU_032087_2_0_0"/>
<dbReference type="Proteomes" id="UP001154401">
    <property type="component" value="Chromosome"/>
</dbReference>
<dbReference type="GO" id="GO:0003723">
    <property type="term" value="F:RNA binding"/>
    <property type="evidence" value="ECO:0007669"/>
    <property type="project" value="InterPro"/>
</dbReference>
<dbReference type="GO" id="GO:0160148">
    <property type="term" value="F:tRNA pseudouridine(55) synthase activity"/>
    <property type="evidence" value="ECO:0007669"/>
    <property type="project" value="UniProtKB-EC"/>
</dbReference>
<dbReference type="GO" id="GO:1990481">
    <property type="term" value="P:mRNA pseudouridine synthesis"/>
    <property type="evidence" value="ECO:0007669"/>
    <property type="project" value="TreeGrafter"/>
</dbReference>
<dbReference type="GO" id="GO:0031119">
    <property type="term" value="P:tRNA pseudouridine synthesis"/>
    <property type="evidence" value="ECO:0007669"/>
    <property type="project" value="UniProtKB-UniRule"/>
</dbReference>
<dbReference type="CDD" id="cd02573">
    <property type="entry name" value="PseudoU_synth_EcTruB"/>
    <property type="match status" value="1"/>
</dbReference>
<dbReference type="FunFam" id="3.30.2350.10:FF:000035">
    <property type="entry name" value="tRNA pseudouridine synthase B"/>
    <property type="match status" value="1"/>
</dbReference>
<dbReference type="Gene3D" id="3.30.2350.10">
    <property type="entry name" value="Pseudouridine synthase"/>
    <property type="match status" value="1"/>
</dbReference>
<dbReference type="HAMAP" id="MF_01080">
    <property type="entry name" value="TruB_bact"/>
    <property type="match status" value="1"/>
</dbReference>
<dbReference type="InterPro" id="IPR020103">
    <property type="entry name" value="PsdUridine_synth_cat_dom_sf"/>
</dbReference>
<dbReference type="InterPro" id="IPR002501">
    <property type="entry name" value="PsdUridine_synth_N"/>
</dbReference>
<dbReference type="InterPro" id="IPR014780">
    <property type="entry name" value="tRNA_psdUridine_synth_TruB"/>
</dbReference>
<dbReference type="InterPro" id="IPR032819">
    <property type="entry name" value="TruB_C"/>
</dbReference>
<dbReference type="NCBIfam" id="TIGR00431">
    <property type="entry name" value="TruB"/>
    <property type="match status" value="1"/>
</dbReference>
<dbReference type="PANTHER" id="PTHR13767:SF2">
    <property type="entry name" value="PSEUDOURIDYLATE SYNTHASE TRUB1"/>
    <property type="match status" value="1"/>
</dbReference>
<dbReference type="PANTHER" id="PTHR13767">
    <property type="entry name" value="TRNA-PSEUDOURIDINE SYNTHASE"/>
    <property type="match status" value="1"/>
</dbReference>
<dbReference type="Pfam" id="PF16198">
    <property type="entry name" value="TruB_C_2"/>
    <property type="match status" value="1"/>
</dbReference>
<dbReference type="Pfam" id="PF01509">
    <property type="entry name" value="TruB_N"/>
    <property type="match status" value="1"/>
</dbReference>
<dbReference type="SUPFAM" id="SSF55120">
    <property type="entry name" value="Pseudouridine synthase"/>
    <property type="match status" value="1"/>
</dbReference>
<gene>
    <name evidence="1" type="primary">truB</name>
    <name type="ordered locus">CTLon_0345</name>
</gene>
<reference key="1">
    <citation type="journal article" date="2008" name="Genome Res.">
        <title>Chlamydia trachomatis: genome sequence analysis of lymphogranuloma venereum isolates.</title>
        <authorList>
            <person name="Thomson N.R."/>
            <person name="Holden M.T.G."/>
            <person name="Carder C."/>
            <person name="Lennard N."/>
            <person name="Lockey S.J."/>
            <person name="Marsh P."/>
            <person name="Skipp P."/>
            <person name="O'Connor C.D."/>
            <person name="Goodhead I."/>
            <person name="Norbertzcak H."/>
            <person name="Harris B."/>
            <person name="Ormond D."/>
            <person name="Rance R."/>
            <person name="Quail M.A."/>
            <person name="Parkhill J."/>
            <person name="Stephens R.S."/>
            <person name="Clarke I.N."/>
        </authorList>
    </citation>
    <scope>NUCLEOTIDE SEQUENCE [LARGE SCALE GENOMIC DNA]</scope>
    <source>
        <strain>UCH-1/proctitis</strain>
    </source>
</reference>
<accession>B0BB81</accession>
<keyword id="KW-0413">Isomerase</keyword>
<keyword id="KW-0819">tRNA processing</keyword>
<proteinExistence type="inferred from homology"/>
<name>TRUB_CHLTB</name>
<comment type="function">
    <text evidence="1">Responsible for synthesis of pseudouridine from uracil-55 in the psi GC loop of transfer RNAs.</text>
</comment>
<comment type="catalytic activity">
    <reaction evidence="1">
        <text>uridine(55) in tRNA = pseudouridine(55) in tRNA</text>
        <dbReference type="Rhea" id="RHEA:42532"/>
        <dbReference type="Rhea" id="RHEA-COMP:10101"/>
        <dbReference type="Rhea" id="RHEA-COMP:10102"/>
        <dbReference type="ChEBI" id="CHEBI:65314"/>
        <dbReference type="ChEBI" id="CHEBI:65315"/>
        <dbReference type="EC" id="5.4.99.25"/>
    </reaction>
</comment>
<comment type="similarity">
    <text evidence="1">Belongs to the pseudouridine synthase TruB family. Type 1 subfamily.</text>
</comment>
<feature type="chain" id="PRO_1000136812" description="tRNA pseudouridine synthase B">
    <location>
        <begin position="1"/>
        <end position="241"/>
    </location>
</feature>
<feature type="active site" description="Nucleophile" evidence="1">
    <location>
        <position position="45"/>
    </location>
</feature>
<evidence type="ECO:0000255" key="1">
    <source>
        <dbReference type="HAMAP-Rule" id="MF_01080"/>
    </source>
</evidence>
<sequence length="241" mass="26934">MELATESIEGVLLVDKPQGRTSFSLIRSLVRLIGVKKIGHAGTLDPFATGVMVMLIGRKFTRLSDIMLFEDKEYAAVAHLGTTTDTYDCDGKIVGRSKKVPTMDEVLTCTSYFQGEIQQVPPMFSAKKVQGKKLYEYARQGLSIERRFATVTVNLRLVKYEYPRLHFVVQCSKGTYIRSIAHELGNMLGCGAYLEELRRLRSGSFSIDQCIDGNLLDEPEFNVSPYLRDANGLILQPAPVL</sequence>